<accession>P44221</accession>
<name>Y1497_HAEIN</name>
<organism>
    <name type="scientific">Haemophilus influenzae (strain ATCC 51907 / DSM 11121 / KW20 / Rd)</name>
    <dbReference type="NCBI Taxonomy" id="71421"/>
    <lineage>
        <taxon>Bacteria</taxon>
        <taxon>Pseudomonadati</taxon>
        <taxon>Pseudomonadota</taxon>
        <taxon>Gammaproteobacteria</taxon>
        <taxon>Pasteurellales</taxon>
        <taxon>Pasteurellaceae</taxon>
        <taxon>Haemophilus</taxon>
    </lineage>
</organism>
<dbReference type="EMBL" id="L42023">
    <property type="protein sequence ID" value="AAC23137.1"/>
    <property type="molecule type" value="Genomic_DNA"/>
</dbReference>
<dbReference type="PIR" id="F64032">
    <property type="entry name" value="F64032"/>
</dbReference>
<dbReference type="RefSeq" id="NP_439646.1">
    <property type="nucleotide sequence ID" value="NC_000907.1"/>
</dbReference>
<dbReference type="SMR" id="P44221"/>
<dbReference type="STRING" id="71421.HI_1497"/>
<dbReference type="EnsemblBacteria" id="AAC23137">
    <property type="protein sequence ID" value="AAC23137"/>
    <property type="gene ID" value="HI_1497"/>
</dbReference>
<dbReference type="KEGG" id="hin:HI_1497"/>
<dbReference type="PATRIC" id="fig|71421.8.peg.1566"/>
<dbReference type="eggNOG" id="COG1734">
    <property type="taxonomic scope" value="Bacteria"/>
</dbReference>
<dbReference type="HOGENOM" id="CLU_158637_3_0_6"/>
<dbReference type="OrthoDB" id="962301at2"/>
<dbReference type="BioCyc" id="HINF71421:G1GJ1-1519-MONOMER"/>
<dbReference type="Proteomes" id="UP000000579">
    <property type="component" value="Chromosome"/>
</dbReference>
<dbReference type="GO" id="GO:0008270">
    <property type="term" value="F:zinc ion binding"/>
    <property type="evidence" value="ECO:0007669"/>
    <property type="project" value="UniProtKB-KW"/>
</dbReference>
<dbReference type="GO" id="GO:1900378">
    <property type="term" value="P:positive regulation of secondary metabolite biosynthetic process"/>
    <property type="evidence" value="ECO:0000318"/>
    <property type="project" value="GO_Central"/>
</dbReference>
<dbReference type="Gene3D" id="1.20.120.910">
    <property type="entry name" value="DksA, coiled-coil domain"/>
    <property type="match status" value="1"/>
</dbReference>
<dbReference type="InterPro" id="IPR020460">
    <property type="entry name" value="Znf_C4-type_bac"/>
</dbReference>
<dbReference type="InterPro" id="IPR012783">
    <property type="entry name" value="Znf_C4_TraR"/>
</dbReference>
<dbReference type="InterPro" id="IPR000962">
    <property type="entry name" value="Znf_DskA_TraR"/>
</dbReference>
<dbReference type="InterPro" id="IPR020458">
    <property type="entry name" value="Znf_DskA_TraR_CS"/>
</dbReference>
<dbReference type="NCBIfam" id="TIGR02419">
    <property type="entry name" value="C4_traR_proteo"/>
    <property type="match status" value="1"/>
</dbReference>
<dbReference type="PANTHER" id="PTHR38777:SF1">
    <property type="entry name" value="DNAK SUPPRESSOR PROTEIN"/>
    <property type="match status" value="1"/>
</dbReference>
<dbReference type="PANTHER" id="PTHR38777">
    <property type="entry name" value="FELS-2 PROPHAGE PROTEIN"/>
    <property type="match status" value="1"/>
</dbReference>
<dbReference type="Pfam" id="PF01258">
    <property type="entry name" value="zf-dskA_traR"/>
    <property type="match status" value="1"/>
</dbReference>
<dbReference type="PRINTS" id="PR00618">
    <property type="entry name" value="DKSAZNFINGER"/>
</dbReference>
<dbReference type="SUPFAM" id="SSF57716">
    <property type="entry name" value="Glucocorticoid receptor-like (DNA-binding domain)"/>
    <property type="match status" value="1"/>
</dbReference>
<dbReference type="PROSITE" id="PS01102">
    <property type="entry name" value="ZF_DKSA_1"/>
    <property type="match status" value="1"/>
</dbReference>
<dbReference type="PROSITE" id="PS51128">
    <property type="entry name" value="ZF_DKSA_2"/>
    <property type="match status" value="1"/>
</dbReference>
<proteinExistence type="predicted"/>
<gene>
    <name type="ordered locus">HI_1497</name>
</gene>
<keyword id="KW-0479">Metal-binding</keyword>
<keyword id="KW-1185">Reference proteome</keyword>
<keyword id="KW-0862">Zinc</keyword>
<keyword id="KW-0863">Zinc-finger</keyword>
<feature type="chain" id="PRO_0000187552" description="Uncharacterized protein HI_1497">
    <location>
        <begin position="1"/>
        <end position="75"/>
    </location>
</feature>
<feature type="zinc finger region" description="dksA C4-type" evidence="1">
    <location>
        <begin position="43"/>
        <end position="67"/>
    </location>
</feature>
<protein>
    <recommendedName>
        <fullName>Uncharacterized protein HI_1497</fullName>
    </recommendedName>
</protein>
<sequence length="75" mass="8405">MADVLDQLNEREEALLQNILAPHLDTELSDDEVDAIAEAGRQCSECGLPIPTTRLRANPFAHRCVSCQQDWEEGR</sequence>
<reference key="1">
    <citation type="journal article" date="1995" name="Science">
        <title>Whole-genome random sequencing and assembly of Haemophilus influenzae Rd.</title>
        <authorList>
            <person name="Fleischmann R.D."/>
            <person name="Adams M.D."/>
            <person name="White O."/>
            <person name="Clayton R.A."/>
            <person name="Kirkness E.F."/>
            <person name="Kerlavage A.R."/>
            <person name="Bult C.J."/>
            <person name="Tomb J.-F."/>
            <person name="Dougherty B.A."/>
            <person name="Merrick J.M."/>
            <person name="McKenney K."/>
            <person name="Sutton G.G."/>
            <person name="FitzHugh W."/>
            <person name="Fields C.A."/>
            <person name="Gocayne J.D."/>
            <person name="Scott J.D."/>
            <person name="Shirley R."/>
            <person name="Liu L.-I."/>
            <person name="Glodek A."/>
            <person name="Kelley J.M."/>
            <person name="Weidman J.F."/>
            <person name="Phillips C.A."/>
            <person name="Spriggs T."/>
            <person name="Hedblom E."/>
            <person name="Cotton M.D."/>
            <person name="Utterback T.R."/>
            <person name="Hanna M.C."/>
            <person name="Nguyen D.T."/>
            <person name="Saudek D.M."/>
            <person name="Brandon R.C."/>
            <person name="Fine L.D."/>
            <person name="Fritchman J.L."/>
            <person name="Fuhrmann J.L."/>
            <person name="Geoghagen N.S.M."/>
            <person name="Gnehm C.L."/>
            <person name="McDonald L.A."/>
            <person name="Small K.V."/>
            <person name="Fraser C.M."/>
            <person name="Smith H.O."/>
            <person name="Venter J.C."/>
        </authorList>
    </citation>
    <scope>NUCLEOTIDE SEQUENCE [LARGE SCALE GENOMIC DNA]</scope>
    <source>
        <strain>ATCC 51907 / DSM 11121 / KW20 / Rd</strain>
    </source>
</reference>
<evidence type="ECO:0000255" key="1">
    <source>
        <dbReference type="PROSITE-ProRule" id="PRU00510"/>
    </source>
</evidence>